<accession>Q9ICP7</accession>
<dbReference type="EC" id="2.7.7.-"/>
<dbReference type="EC" id="3.1.21.-"/>
<dbReference type="EC" id="3.6.1.-"/>
<dbReference type="EMBL" id="AJ290434">
    <property type="protein sequence ID" value="CAB96405.1"/>
    <property type="molecule type" value="Genomic_DNA"/>
</dbReference>
<dbReference type="SMR" id="Q9ICP7"/>
<dbReference type="Proteomes" id="UP001515400">
    <property type="component" value="Genome"/>
</dbReference>
<dbReference type="GO" id="GO:0042025">
    <property type="term" value="C:host cell nucleus"/>
    <property type="evidence" value="ECO:0007669"/>
    <property type="project" value="UniProtKB-SubCell"/>
</dbReference>
<dbReference type="GO" id="GO:0005524">
    <property type="term" value="F:ATP binding"/>
    <property type="evidence" value="ECO:0007669"/>
    <property type="project" value="UniProtKB-KW"/>
</dbReference>
<dbReference type="GO" id="GO:0016887">
    <property type="term" value="F:ATP hydrolysis activity"/>
    <property type="evidence" value="ECO:0007669"/>
    <property type="project" value="RHEA"/>
</dbReference>
<dbReference type="GO" id="GO:0003677">
    <property type="term" value="F:DNA binding"/>
    <property type="evidence" value="ECO:0007669"/>
    <property type="project" value="UniProtKB-KW"/>
</dbReference>
<dbReference type="GO" id="GO:0004519">
    <property type="term" value="F:endonuclease activity"/>
    <property type="evidence" value="ECO:0007669"/>
    <property type="project" value="UniProtKB-KW"/>
</dbReference>
<dbReference type="GO" id="GO:0046872">
    <property type="term" value="F:metal ion binding"/>
    <property type="evidence" value="ECO:0007669"/>
    <property type="project" value="UniProtKB-KW"/>
</dbReference>
<dbReference type="GO" id="GO:0016779">
    <property type="term" value="F:nucleotidyltransferase activity"/>
    <property type="evidence" value="ECO:0007669"/>
    <property type="project" value="UniProtKB-KW"/>
</dbReference>
<dbReference type="GO" id="GO:0003723">
    <property type="term" value="F:RNA binding"/>
    <property type="evidence" value="ECO:0007669"/>
    <property type="project" value="InterPro"/>
</dbReference>
<dbReference type="GO" id="GO:0003724">
    <property type="term" value="F:RNA helicase activity"/>
    <property type="evidence" value="ECO:0007669"/>
    <property type="project" value="InterPro"/>
</dbReference>
<dbReference type="GO" id="GO:0006260">
    <property type="term" value="P:DNA replication"/>
    <property type="evidence" value="ECO:0007669"/>
    <property type="project" value="UniProtKB-KW"/>
</dbReference>
<dbReference type="FunFam" id="3.40.1310.20:FF:000002">
    <property type="entry name" value="Master replication protein"/>
    <property type="match status" value="1"/>
</dbReference>
<dbReference type="Gene3D" id="3.40.1310.20">
    <property type="match status" value="1"/>
</dbReference>
<dbReference type="InterPro" id="IPR049912">
    <property type="entry name" value="CRESS_DNA_REP"/>
</dbReference>
<dbReference type="InterPro" id="IPR000605">
    <property type="entry name" value="Helicase_SF3_ssDNA/RNA_vir"/>
</dbReference>
<dbReference type="Pfam" id="PF00910">
    <property type="entry name" value="RNA_helicase"/>
    <property type="match status" value="1"/>
</dbReference>
<dbReference type="Pfam" id="PF02407">
    <property type="entry name" value="Viral_Rep"/>
    <property type="match status" value="1"/>
</dbReference>
<dbReference type="PROSITE" id="PS52020">
    <property type="entry name" value="CRESS_DNA_REP"/>
    <property type="match status" value="1"/>
</dbReference>
<organism>
    <name type="scientific">Subterranean clover stunt virus (strain F)</name>
    <name type="common">SCSV</name>
    <dbReference type="NCBI Taxonomy" id="291607"/>
    <lineage>
        <taxon>Viruses</taxon>
        <taxon>Monodnaviria</taxon>
        <taxon>Shotokuvirae</taxon>
        <taxon>Cressdnaviricota</taxon>
        <taxon>Arfiviricetes</taxon>
        <taxon>Mulpavirales</taxon>
        <taxon>Nanoviridae</taxon>
        <taxon>Nanovirus</taxon>
        <taxon>Subterranean clover stunt virus</taxon>
    </lineage>
</organism>
<feature type="chain" id="PRO_0000378521" description="Master replication protein">
    <location>
        <begin position="1"/>
        <end position="286"/>
    </location>
</feature>
<feature type="domain" description="CRESS-DNA virus Rep endonuclease" evidence="3">
    <location>
        <begin position="2"/>
        <end position="96"/>
    </location>
</feature>
<feature type="short sequence motif" description="RCR-1" evidence="3">
    <location>
        <begin position="9"/>
        <end position="12"/>
    </location>
</feature>
<feature type="short sequence motif" description="RCR-2" evidence="3">
    <location>
        <begin position="41"/>
        <end position="43"/>
    </location>
</feature>
<feature type="short sequence motif" description="Nuclear localization signal" evidence="2">
    <location>
        <begin position="50"/>
        <end position="70"/>
    </location>
</feature>
<feature type="short sequence motif" description="RCR-3" evidence="3">
    <location>
        <begin position="79"/>
        <end position="82"/>
    </location>
</feature>
<feature type="short sequence motif" description="Nuclear localization signal" evidence="2">
    <location>
        <begin position="96"/>
        <end position="102"/>
    </location>
</feature>
<feature type="active site" description="For DNA cleavage activity" evidence="3">
    <location>
        <position position="79"/>
    </location>
</feature>
<feature type="binding site" evidence="2">
    <location>
        <position position="33"/>
    </location>
    <ligand>
        <name>a divalent metal cation</name>
        <dbReference type="ChEBI" id="CHEBI:60240"/>
    </ligand>
</feature>
<feature type="binding site" evidence="2">
    <location>
        <position position="41"/>
    </location>
    <ligand>
        <name>a divalent metal cation</name>
        <dbReference type="ChEBI" id="CHEBI:60240"/>
    </ligand>
</feature>
<feature type="binding site" evidence="2">
    <location>
        <position position="84"/>
    </location>
    <ligand>
        <name>a divalent metal cation</name>
        <dbReference type="ChEBI" id="CHEBI:60240"/>
    </ligand>
</feature>
<feature type="binding site" evidence="1">
    <location>
        <begin position="180"/>
        <end position="188"/>
    </location>
    <ligand>
        <name>ATP</name>
        <dbReference type="ChEBI" id="CHEBI:30616"/>
    </ligand>
</feature>
<comment type="function">
    <text evidence="1">Essential for the replication of all genomic viral ssDNA (trans-replication). The closed circular ssDNA genome is first converted to a superhelical dsDNA. Rep binds a specific hairpin at the genome origin of replication. Introduces an endonucleolytic nick within the conserved sequence 5'-A[GT]TATTAC-3' in the intergenic region of the genome, thereby initiating the rolling circle replication (RCR). Following cleavage, binds covalently to the 5'-phosphate of DNA as a tyrosyl ester. The cleavage gives rise to a free 3'-OH that serves as a primer for the cellular DNA polymerase. The polymerase synthesizes the (+) strand DNA by rolling circle mechanism. After one round of replication, a Rep-catalyzed nucleotidyl transfer reaction releases a circular single-stranded virus genome, thereby terminating the replication. Displays origin-specific DNA cleavage, nucleotidyl transferase, ATPase and helicase activities (By similarity).</text>
</comment>
<comment type="catalytic activity">
    <reaction>
        <text>ATP + H2O = ADP + phosphate + H(+)</text>
        <dbReference type="Rhea" id="RHEA:13065"/>
        <dbReference type="ChEBI" id="CHEBI:15377"/>
        <dbReference type="ChEBI" id="CHEBI:15378"/>
        <dbReference type="ChEBI" id="CHEBI:30616"/>
        <dbReference type="ChEBI" id="CHEBI:43474"/>
        <dbReference type="ChEBI" id="CHEBI:456216"/>
    </reaction>
</comment>
<comment type="cofactor">
    <cofactor evidence="1">
        <name>Mg(2+)</name>
        <dbReference type="ChEBI" id="CHEBI:18420"/>
    </cofactor>
    <cofactor evidence="1">
        <name>Mn(2+)</name>
        <dbReference type="ChEBI" id="CHEBI:29035"/>
    </cofactor>
    <text evidence="1">Divalent metal cations, possibly Mg(2+) or Mn(2+).</text>
</comment>
<comment type="subunit">
    <text evidence="1 4">Homooligomer (Potential). Rep binds to repeated DNA motifs (iterons) (By similarity).</text>
</comment>
<comment type="subcellular location">
    <subcellularLocation>
        <location evidence="4">Host nucleus</location>
    </subcellularLocation>
</comment>
<comment type="domain">
    <text evidence="1">There are 3 rolling circle replication (RCR) motifs. RCR-2 is probably involved in metal coordination. RCR-3 is required for phosphodiester bond cleavage for initiation of RCR (By similarity).</text>
</comment>
<comment type="miscellaneous">
    <text>The genome of nanoviruses is composed of six to eight segments. In addition, some isolates contain subviral DNAs.</text>
</comment>
<comment type="similarity">
    <text evidence="4">Belongs to the nanoviridea/circoviridae replication-associated protein family.</text>
</comment>
<sequence>MARQVICWCFTLNNPLAPLSLHESMKYLVYQTEAGDNGTIHYQGYVEMKKRTSLVQMKKLLPGAHLEKRRGSQGEARAYAMKEDSRVEGPWEFGEFKEVLEDKLRSVMEDMKSTGKRPVEYIEDCCNTYDKSSATLREFRGELKKKQAIEEWQLQRQPWMDEVERLMETKDCRRIIWVYGPQGGEGKTSYAKHLVKTRDAFYSTGGKTADIAFAWDHQELVLFDFPRSFEEYVNYGVIEQLKNGIVQSGKYQSIVKYCNYVEVIVFANFIPRSGMFSEDRIVIVYA</sequence>
<evidence type="ECO:0000250" key="1"/>
<evidence type="ECO:0000255" key="2"/>
<evidence type="ECO:0000255" key="3">
    <source>
        <dbReference type="PROSITE-ProRule" id="PRU01364"/>
    </source>
</evidence>
<evidence type="ECO:0000305" key="4"/>
<proteinExistence type="inferred from homology"/>
<gene>
    <name type="primary">DNA-R</name>
    <name type="synonym">C8</name>
</gene>
<name>MREP_SCSVF</name>
<keyword id="KW-0067">ATP-binding</keyword>
<keyword id="KW-0190">Covalent protein-DNA linkage</keyword>
<keyword id="KW-0235">DNA replication</keyword>
<keyword id="KW-0238">DNA-binding</keyword>
<keyword id="KW-0255">Endonuclease</keyword>
<keyword id="KW-0347">Helicase</keyword>
<keyword id="KW-1048">Host nucleus</keyword>
<keyword id="KW-0378">Hydrolase</keyword>
<keyword id="KW-0479">Metal-binding</keyword>
<keyword id="KW-0511">Multifunctional enzyme</keyword>
<keyword id="KW-0540">Nuclease</keyword>
<keyword id="KW-0547">Nucleotide-binding</keyword>
<keyword id="KW-0548">Nucleotidyltransferase</keyword>
<keyword id="KW-1185">Reference proteome</keyword>
<keyword id="KW-0808">Transferase</keyword>
<reference key="1">
    <citation type="journal article" date="2000" name="Virology">
        <title>The master rep concept in nanovirus replication: identification of missing genome components and potential for natural genetic reassortment.</title>
        <authorList>
            <person name="Timchenko T."/>
            <person name="Katul L."/>
            <person name="Sano Y."/>
            <person name="de Kouchkovsky F."/>
            <person name="Vetten H.J."/>
            <person name="Gronenborn B."/>
        </authorList>
    </citation>
    <scope>NUCLEOTIDE SEQUENCE [GENOMIC DNA]</scope>
</reference>
<organismHost>
    <name type="scientific">Trifolium subterraneum</name>
    <name type="common">Subterranean clover</name>
    <dbReference type="NCBI Taxonomy" id="3900"/>
</organismHost>
<protein>
    <recommendedName>
        <fullName>Master replication protein</fullName>
        <shortName>M-Rep</shortName>
        <ecNumber>2.7.7.-</ecNumber>
        <ecNumber>3.1.21.-</ecNumber>
        <ecNumber>3.6.1.-</ecNumber>
    </recommendedName>
</protein>